<accession>A4SNP5</accession>
<gene>
    <name evidence="1" type="primary">rnfA</name>
    <name type="ordered locus">ASA_2485</name>
</gene>
<keyword id="KW-0997">Cell inner membrane</keyword>
<keyword id="KW-1003">Cell membrane</keyword>
<keyword id="KW-0249">Electron transport</keyword>
<keyword id="KW-0472">Membrane</keyword>
<keyword id="KW-1278">Translocase</keyword>
<keyword id="KW-0812">Transmembrane</keyword>
<keyword id="KW-1133">Transmembrane helix</keyword>
<keyword id="KW-0813">Transport</keyword>
<evidence type="ECO:0000255" key="1">
    <source>
        <dbReference type="HAMAP-Rule" id="MF_00459"/>
    </source>
</evidence>
<dbReference type="EC" id="7.-.-.-" evidence="1"/>
<dbReference type="EMBL" id="CP000644">
    <property type="protein sequence ID" value="ABO90517.1"/>
    <property type="molecule type" value="Genomic_DNA"/>
</dbReference>
<dbReference type="SMR" id="A4SNP5"/>
<dbReference type="STRING" id="29491.GCA_000820065_00632"/>
<dbReference type="KEGG" id="asa:ASA_2485"/>
<dbReference type="eggNOG" id="COG4657">
    <property type="taxonomic scope" value="Bacteria"/>
</dbReference>
<dbReference type="HOGENOM" id="CLU_095255_1_0_6"/>
<dbReference type="Proteomes" id="UP000000225">
    <property type="component" value="Chromosome"/>
</dbReference>
<dbReference type="GO" id="GO:0005886">
    <property type="term" value="C:plasma membrane"/>
    <property type="evidence" value="ECO:0007669"/>
    <property type="project" value="UniProtKB-SubCell"/>
</dbReference>
<dbReference type="GO" id="GO:0022900">
    <property type="term" value="P:electron transport chain"/>
    <property type="evidence" value="ECO:0007669"/>
    <property type="project" value="UniProtKB-UniRule"/>
</dbReference>
<dbReference type="HAMAP" id="MF_00459">
    <property type="entry name" value="RsxA_RnfA"/>
    <property type="match status" value="1"/>
</dbReference>
<dbReference type="InterPro" id="IPR011293">
    <property type="entry name" value="Ion_transpt_RnfA/RsxA"/>
</dbReference>
<dbReference type="InterPro" id="IPR003667">
    <property type="entry name" value="NqrDE/RnfAE"/>
</dbReference>
<dbReference type="InterPro" id="IPR050133">
    <property type="entry name" value="NqrDE/RnfAE_oxidrdctase"/>
</dbReference>
<dbReference type="NCBIfam" id="NF003481">
    <property type="entry name" value="PRK05151.1"/>
    <property type="match status" value="1"/>
</dbReference>
<dbReference type="NCBIfam" id="TIGR01943">
    <property type="entry name" value="rnfA"/>
    <property type="match status" value="1"/>
</dbReference>
<dbReference type="PANTHER" id="PTHR30335">
    <property type="entry name" value="INTEGRAL MEMBRANE PROTEIN OF SOXR-REDUCING COMPLEX"/>
    <property type="match status" value="1"/>
</dbReference>
<dbReference type="PANTHER" id="PTHR30335:SF0">
    <property type="entry name" value="ION-TRANSLOCATING OXIDOREDUCTASE COMPLEX SUBUNIT A"/>
    <property type="match status" value="1"/>
</dbReference>
<dbReference type="Pfam" id="PF02508">
    <property type="entry name" value="Rnf-Nqr"/>
    <property type="match status" value="1"/>
</dbReference>
<dbReference type="PIRSF" id="PIRSF006102">
    <property type="entry name" value="NQR_DE"/>
    <property type="match status" value="1"/>
</dbReference>
<comment type="function">
    <text evidence="1">Part of a membrane-bound complex that couples electron transfer with translocation of ions across the membrane.</text>
</comment>
<comment type="subunit">
    <text evidence="1">The complex is composed of six subunits: RnfA, RnfB, RnfC, RnfD, RnfE and RnfG.</text>
</comment>
<comment type="subcellular location">
    <subcellularLocation>
        <location evidence="1">Cell inner membrane</location>
        <topology evidence="1">Multi-pass membrane protein</topology>
    </subcellularLocation>
</comment>
<comment type="similarity">
    <text evidence="1">Belongs to the NqrDE/RnfAE family.</text>
</comment>
<organism>
    <name type="scientific">Aeromonas salmonicida (strain A449)</name>
    <dbReference type="NCBI Taxonomy" id="382245"/>
    <lineage>
        <taxon>Bacteria</taxon>
        <taxon>Pseudomonadati</taxon>
        <taxon>Pseudomonadota</taxon>
        <taxon>Gammaproteobacteria</taxon>
        <taxon>Aeromonadales</taxon>
        <taxon>Aeromonadaceae</taxon>
        <taxon>Aeromonas</taxon>
    </lineage>
</organism>
<reference key="1">
    <citation type="journal article" date="2008" name="BMC Genomics">
        <title>The genome of Aeromonas salmonicida subsp. salmonicida A449: insights into the evolution of a fish pathogen.</title>
        <authorList>
            <person name="Reith M.E."/>
            <person name="Singh R.K."/>
            <person name="Curtis B."/>
            <person name="Boyd J.M."/>
            <person name="Bouevitch A."/>
            <person name="Kimball J."/>
            <person name="Munholland J."/>
            <person name="Murphy C."/>
            <person name="Sarty D."/>
            <person name="Williams J."/>
            <person name="Nash J.H."/>
            <person name="Johnson S.C."/>
            <person name="Brown L.L."/>
        </authorList>
    </citation>
    <scope>NUCLEOTIDE SEQUENCE [LARGE SCALE GENOMIC DNA]</scope>
    <source>
        <strain>A449</strain>
    </source>
</reference>
<feature type="chain" id="PRO_1000013520" description="Ion-translocating oxidoreductase complex subunit A">
    <location>
        <begin position="1"/>
        <end position="193"/>
    </location>
</feature>
<feature type="transmembrane region" description="Helical" evidence="1">
    <location>
        <begin position="5"/>
        <end position="25"/>
    </location>
</feature>
<feature type="transmembrane region" description="Helical" evidence="1">
    <location>
        <begin position="39"/>
        <end position="59"/>
    </location>
</feature>
<feature type="transmembrane region" description="Helical" evidence="1">
    <location>
        <begin position="63"/>
        <end position="83"/>
    </location>
</feature>
<feature type="transmembrane region" description="Helical" evidence="1">
    <location>
        <begin position="102"/>
        <end position="122"/>
    </location>
</feature>
<feature type="transmembrane region" description="Helical" evidence="1">
    <location>
        <begin position="134"/>
        <end position="154"/>
    </location>
</feature>
<feature type="transmembrane region" description="Helical" evidence="1">
    <location>
        <begin position="171"/>
        <end position="191"/>
    </location>
</feature>
<protein>
    <recommendedName>
        <fullName evidence="1">Ion-translocating oxidoreductase complex subunit A</fullName>
        <ecNumber evidence="1">7.-.-.-</ecNumber>
    </recommendedName>
    <alternativeName>
        <fullName evidence="1">Rnf electron transport complex subunit A</fullName>
    </alternativeName>
</protein>
<proteinExistence type="inferred from homology"/>
<sequence>MTEYLLLLVSTVLINNFVLVKFLGLCPFMGVSGKLETAVGMGLATTFVMTLASASSYLMEHYILIPLNIAYLRTLAFILVIAVVVQFTEMVIRKSSPTLYRLLGIFLPLITTNCAVLGVALLSINERHNFIQSIIYGFGAAAGFSLVLILFAAMRERLVAADVPTPFRGVSIAMVTAGLMSLAFMGFTGLIKI</sequence>
<name>RNFA_AERS4</name>